<proteinExistence type="evidence at protein level"/>
<keyword id="KW-0004">4Fe-4S</keyword>
<keyword id="KW-0051">Antiviral defense</keyword>
<keyword id="KW-0408">Iron</keyword>
<keyword id="KW-0411">Iron-sulfur</keyword>
<keyword id="KW-0456">Lyase</keyword>
<keyword id="KW-0479">Metal-binding</keyword>
<keyword id="KW-1185">Reference proteome</keyword>
<keyword id="KW-0949">S-adenosyl-L-methionine</keyword>
<comment type="function">
    <text evidence="1 3 7">Expression of pVip50 in E.coli (strain MG1655) confers resistance to phage P1; has no effect against T7. Catalyzes the conversion of cytosine triphosphate (CTP) to 3'-deoxy-3',4'-didehydro-CTP (ddhCTP), probably via a SAM-dependent radical mechanism (PubMed:32937646). The modified nucleotide represses transcription from T7 RNA polymerase-directed genes (possibly by acting as chain terminators), strongly suggesting these nucleotides block viral polymerase transcription (By similarity). How this protein allows bacteria to resist viruses that do not encode their own RNA polymerase (such as lambda, P1) is unknown (Probable).</text>
</comment>
<comment type="catalytic activity">
    <reaction evidence="7">
        <text>CTP + AH2 + S-adenosyl-L-methionine = 3'-deoxy-3',4'-didehydro-CTP + 5'-deoxyadenosine + L-methionine + A + H2O + H(+)</text>
        <dbReference type="Rhea" id="RHEA:65944"/>
        <dbReference type="ChEBI" id="CHEBI:13193"/>
        <dbReference type="ChEBI" id="CHEBI:15377"/>
        <dbReference type="ChEBI" id="CHEBI:15378"/>
        <dbReference type="ChEBI" id="CHEBI:17319"/>
        <dbReference type="ChEBI" id="CHEBI:17499"/>
        <dbReference type="ChEBI" id="CHEBI:37563"/>
        <dbReference type="ChEBI" id="CHEBI:57844"/>
        <dbReference type="ChEBI" id="CHEBI:59789"/>
        <dbReference type="ChEBI" id="CHEBI:166821"/>
    </reaction>
</comment>
<comment type="cofactor">
    <cofactor evidence="2">
        <name>[4Fe-4S] cluster</name>
        <dbReference type="ChEBI" id="CHEBI:49883"/>
    </cofactor>
</comment>
<comment type="similarity">
    <text evidence="7">Belongs to the radical SAM superfamily. Viperin family.</text>
</comment>
<name>SAND_THEX5</name>
<gene>
    <name evidence="6" type="primary">vip50</name>
    <name evidence="8" type="ORF">AR505_1263</name>
    <name type="ORF">Ga0114162_111300</name>
</gene>
<organism>
    <name type="scientific">Thermoplasmatales archaeon (strain ISO4-H5)</name>
    <dbReference type="NCBI Taxonomy" id="1495144"/>
    <lineage>
        <taxon>Archaea</taxon>
        <taxon>Methanobacteriati</taxon>
        <taxon>Thermoplasmatota</taxon>
        <taxon>Thermoplasmata</taxon>
    </lineage>
</organism>
<dbReference type="EC" id="4.2.-.-" evidence="7"/>
<dbReference type="EMBL" id="CP014214">
    <property type="protein sequence ID" value="AMH94978.1"/>
    <property type="molecule type" value="Genomic_DNA"/>
</dbReference>
<dbReference type="RefSeq" id="WP_066075584.1">
    <property type="nucleotide sequence ID" value="NZ_CP014214.1"/>
</dbReference>
<dbReference type="SMR" id="A0A110A2W7"/>
<dbReference type="STRING" id="1495144.AR505_1263"/>
<dbReference type="GeneID" id="28485614"/>
<dbReference type="KEGG" id="marc:AR505_1263"/>
<dbReference type="Proteomes" id="UP000058290">
    <property type="component" value="Chromosome"/>
</dbReference>
<dbReference type="GO" id="GO:0051539">
    <property type="term" value="F:4 iron, 4 sulfur cluster binding"/>
    <property type="evidence" value="ECO:0007669"/>
    <property type="project" value="UniProtKB-KW"/>
</dbReference>
<dbReference type="GO" id="GO:0016829">
    <property type="term" value="F:lyase activity"/>
    <property type="evidence" value="ECO:0007669"/>
    <property type="project" value="UniProtKB-KW"/>
</dbReference>
<dbReference type="GO" id="GO:0046872">
    <property type="term" value="F:metal ion binding"/>
    <property type="evidence" value="ECO:0007669"/>
    <property type="project" value="UniProtKB-KW"/>
</dbReference>
<dbReference type="GO" id="GO:0051607">
    <property type="term" value="P:defense response to virus"/>
    <property type="evidence" value="ECO:0007669"/>
    <property type="project" value="UniProtKB-KW"/>
</dbReference>
<dbReference type="CDD" id="cd01335">
    <property type="entry name" value="Radical_SAM"/>
    <property type="match status" value="1"/>
</dbReference>
<dbReference type="Gene3D" id="3.20.20.70">
    <property type="entry name" value="Aldolase class I"/>
    <property type="match status" value="1"/>
</dbReference>
<dbReference type="InterPro" id="IPR013785">
    <property type="entry name" value="Aldolase_TIM"/>
</dbReference>
<dbReference type="InterPro" id="IPR006638">
    <property type="entry name" value="Elp3/MiaA/NifB-like_rSAM"/>
</dbReference>
<dbReference type="InterPro" id="IPR051196">
    <property type="entry name" value="RSAD2/Viperin_antiviral"/>
</dbReference>
<dbReference type="InterPro" id="IPR007197">
    <property type="entry name" value="rSAM"/>
</dbReference>
<dbReference type="NCBIfam" id="NF038283">
    <property type="entry name" value="viperin_w_prok"/>
    <property type="match status" value="1"/>
</dbReference>
<dbReference type="PANTHER" id="PTHR21339">
    <property type="entry name" value="RADICAL S-ADENOSYL METHIONINE DOMAIN-CONTAINING PROTEIN 2"/>
    <property type="match status" value="1"/>
</dbReference>
<dbReference type="PANTHER" id="PTHR21339:SF0">
    <property type="entry name" value="S-ADENOSYLMETHIONINE-DEPENDENT NUCLEOTIDE DEHYDRATASE RSAD2"/>
    <property type="match status" value="1"/>
</dbReference>
<dbReference type="Pfam" id="PF04055">
    <property type="entry name" value="Radical_SAM"/>
    <property type="match status" value="1"/>
</dbReference>
<dbReference type="SFLD" id="SFLDS00029">
    <property type="entry name" value="Radical_SAM"/>
    <property type="match status" value="1"/>
</dbReference>
<dbReference type="SFLD" id="SFLDG01067">
    <property type="entry name" value="SPASM/twitch_domain_containing"/>
    <property type="match status" value="1"/>
</dbReference>
<dbReference type="SMART" id="SM00729">
    <property type="entry name" value="Elp3"/>
    <property type="match status" value="1"/>
</dbReference>
<dbReference type="SUPFAM" id="SSF102114">
    <property type="entry name" value="Radical SAM enzymes"/>
    <property type="match status" value="1"/>
</dbReference>
<dbReference type="PROSITE" id="PS51918">
    <property type="entry name" value="RADICAL_SAM"/>
    <property type="match status" value="1"/>
</dbReference>
<sequence>MNTETTSVRKFRSANIHIYGKCNYRCEHCFDRCLTKNYMRPSDWVDTLTFLKEYGVEKINLAGGEPTLYPFLDQMCYLVKGMGFKLSIVSNGSLITEDWMARMEGVVDWIGLSIDSIDEADEIQIGRGRGGHLENIVQVADMAHRHGIKVKLNITVVRRSWMKDFRPFIEKVRPERVKCFRALTLKNANDDVPDTWSITDKQFEDFRRRHEDIGCIVFEDNEDMVSSYVMFDPMGRWMVDSGYEKRFISFEVLRREGLDREVDVEKYFGRNAVYEW</sequence>
<protein>
    <recommendedName>
        <fullName evidence="5">S-adenosylmethionine-dependent nucleotide dehydratase</fullName>
        <shortName evidence="5">SAND</shortName>
        <ecNumber evidence="7">4.2.-.-</ecNumber>
    </recommendedName>
    <alternativeName>
        <fullName evidence="4">Prokaryotic viperin protein pVip50</fullName>
        <shortName evidence="4">pVip50</shortName>
    </alternativeName>
</protein>
<feature type="chain" id="PRO_0000456422" description="S-adenosylmethionine-dependent nucleotide dehydratase">
    <location>
        <begin position="1"/>
        <end position="276"/>
    </location>
</feature>
<feature type="domain" description="Radical SAM core" evidence="2">
    <location>
        <begin position="6"/>
        <end position="216"/>
    </location>
</feature>
<feature type="binding site" evidence="2">
    <location>
        <position position="22"/>
    </location>
    <ligand>
        <name>[4Fe-4S] cluster</name>
        <dbReference type="ChEBI" id="CHEBI:49883"/>
        <note>4Fe-4S-S-AdoMet</note>
    </ligand>
</feature>
<feature type="binding site" evidence="2">
    <location>
        <position position="26"/>
    </location>
    <ligand>
        <name>[4Fe-4S] cluster</name>
        <dbReference type="ChEBI" id="CHEBI:49883"/>
        <note>4Fe-4S-S-AdoMet</note>
    </ligand>
</feature>
<feature type="binding site" evidence="2">
    <location>
        <position position="29"/>
    </location>
    <ligand>
        <name>[4Fe-4S] cluster</name>
        <dbReference type="ChEBI" id="CHEBI:49883"/>
        <note>4Fe-4S-S-AdoMet</note>
    </ligand>
</feature>
<evidence type="ECO:0000250" key="1">
    <source>
        <dbReference type="UniProtKB" id="P0DW53"/>
    </source>
</evidence>
<evidence type="ECO:0000255" key="2">
    <source>
        <dbReference type="PROSITE-ProRule" id="PRU01266"/>
    </source>
</evidence>
<evidence type="ECO:0000269" key="3">
    <source>
    </source>
</evidence>
<evidence type="ECO:0000303" key="4">
    <source>
    </source>
</evidence>
<evidence type="ECO:0000303" key="5">
    <source>
    </source>
</evidence>
<evidence type="ECO:0000305" key="6"/>
<evidence type="ECO:0000305" key="7">
    <source>
    </source>
</evidence>
<evidence type="ECO:0000312" key="8">
    <source>
        <dbReference type="EMBL" id="AMH94978.1"/>
    </source>
</evidence>
<accession>A0A110A2W7</accession>
<reference evidence="8" key="1">
    <citation type="submission" date="2016-01" db="EMBL/GenBank/DDBJ databases">
        <title>The complete genome sequence of the methanogenic archaeon ISO4-H5 provides insights in to the methylotrophic lifestyle of a ruminal representative of the methanomassiliicoccales.</title>
        <authorList>
            <person name="Li Y."/>
            <person name="Leahy S.C."/>
            <person name="Jeyanathan J."/>
            <person name="Cox F."/>
            <person name="Altermann E."/>
            <person name="Henderson G."/>
            <person name="Kelly W.J."/>
            <person name="Lambie S.C."/>
            <person name="Janssen P.H."/>
            <person name="Rakonjac J."/>
            <person name="Attwood G.T."/>
        </authorList>
    </citation>
    <scope>NUCLEOTIDE SEQUENCE [LARGE SCALE GENOMIC DNA]</scope>
    <source>
        <strain>ISO4-H5</strain>
    </source>
</reference>
<reference key="2">
    <citation type="journal article" date="2021" name="Nature">
        <title>Prokaryotic viperins produce diverse antiviral molecules.</title>
        <authorList>
            <person name="Bernheim A."/>
            <person name="Millman A."/>
            <person name="Ofir G."/>
            <person name="Meitav G."/>
            <person name="Avraham C."/>
            <person name="Shomar H."/>
            <person name="Rosenberg M.M."/>
            <person name="Tal N."/>
            <person name="Melamed S."/>
            <person name="Amitai G."/>
            <person name="Sorek R."/>
        </authorList>
    </citation>
    <scope>FUNCTION IN ANTIVIRAL DEFENSE</scope>
    <scope>FUNCTION IN DDHCTP SYNTHESIS</scope>
    <scope>PROBABLE CATALYTIC ACTIVITY</scope>
    <source>
        <strain>ISO4-H5</strain>
    </source>
</reference>
<reference key="3">
    <citation type="journal article" date="2022" name="Front. Mol. Biosci.">
        <title>Radical-SAM dependent nucleotide dehydratase (SAND), rectification of the names of an ancient iron-sulfur enzyme using NC-IUBMB recommendations.</title>
        <authorList>
            <person name="Ji Y."/>
            <person name="Wei L."/>
            <person name="Da A."/>
            <person name="Stark H."/>
            <person name="Hagedoorn P.-L."/>
            <person name="Ciofi-Baffoni S."/>
            <person name="Cowley S.A."/>
            <person name="Louro R.O."/>
            <person name="Todorovic S."/>
            <person name="Mroginski M.A."/>
            <person name="Nicolet Y."/>
            <person name="Roessler M.M."/>
            <person name="Le Brun N.E."/>
            <person name="Piccioli M."/>
            <person name="James W.S."/>
            <person name="Hagen W.R."/>
            <person name="Ebrahimi K.H."/>
        </authorList>
    </citation>
    <scope>NOMENCLATURE</scope>
</reference>